<sequence length="124" mass="13424">MNNLLLVALGGSIGAVFRYLISIFMIQVFGSSFPFGTLLVNVLGSFLMGVIYALGQMSHISPELKALIGVGLLGALTTFSTFSNETLLLMQEGDWLKAALNVVLNLSLCLFMVYLGQQLVFSRI</sequence>
<feature type="chain" id="PRO_1000026419" description="Fluoride-specific ion channel FluC">
    <location>
        <begin position="1"/>
        <end position="124"/>
    </location>
</feature>
<feature type="transmembrane region" description="Helical" evidence="1">
    <location>
        <begin position="4"/>
        <end position="24"/>
    </location>
</feature>
<feature type="transmembrane region" description="Helical" evidence="1">
    <location>
        <begin position="35"/>
        <end position="55"/>
    </location>
</feature>
<feature type="transmembrane region" description="Helical" evidence="1">
    <location>
        <begin position="60"/>
        <end position="80"/>
    </location>
</feature>
<feature type="transmembrane region" description="Helical" evidence="1">
    <location>
        <begin position="102"/>
        <end position="122"/>
    </location>
</feature>
<feature type="binding site" evidence="1">
    <location>
        <position position="74"/>
    </location>
    <ligand>
        <name>Na(+)</name>
        <dbReference type="ChEBI" id="CHEBI:29101"/>
        <note>structural</note>
    </ligand>
</feature>
<feature type="binding site" evidence="1">
    <location>
        <position position="77"/>
    </location>
    <ligand>
        <name>Na(+)</name>
        <dbReference type="ChEBI" id="CHEBI:29101"/>
        <note>structural</note>
    </ligand>
</feature>
<evidence type="ECO:0000255" key="1">
    <source>
        <dbReference type="HAMAP-Rule" id="MF_00454"/>
    </source>
</evidence>
<reference key="1">
    <citation type="submission" date="2006-09" db="EMBL/GenBank/DDBJ databases">
        <title>Complete sequence of chromosome 1 of Shewanella sp. ANA-3.</title>
        <authorList>
            <person name="Copeland A."/>
            <person name="Lucas S."/>
            <person name="Lapidus A."/>
            <person name="Barry K."/>
            <person name="Detter J.C."/>
            <person name="Glavina del Rio T."/>
            <person name="Hammon N."/>
            <person name="Israni S."/>
            <person name="Dalin E."/>
            <person name="Tice H."/>
            <person name="Pitluck S."/>
            <person name="Chertkov O."/>
            <person name="Brettin T."/>
            <person name="Bruce D."/>
            <person name="Han C."/>
            <person name="Tapia R."/>
            <person name="Gilna P."/>
            <person name="Schmutz J."/>
            <person name="Larimer F."/>
            <person name="Land M."/>
            <person name="Hauser L."/>
            <person name="Kyrpides N."/>
            <person name="Kim E."/>
            <person name="Newman D."/>
            <person name="Salticov C."/>
            <person name="Konstantinidis K."/>
            <person name="Klappenback J."/>
            <person name="Tiedje J."/>
            <person name="Richardson P."/>
        </authorList>
    </citation>
    <scope>NUCLEOTIDE SEQUENCE [LARGE SCALE GENOMIC DNA]</scope>
    <source>
        <strain>ANA-3</strain>
    </source>
</reference>
<dbReference type="EMBL" id="CP000469">
    <property type="protein sequence ID" value="ABK48283.1"/>
    <property type="molecule type" value="Genomic_DNA"/>
</dbReference>
<dbReference type="RefSeq" id="WP_011622732.1">
    <property type="nucleotide sequence ID" value="NC_008577.1"/>
</dbReference>
<dbReference type="SMR" id="A0KWW4"/>
<dbReference type="STRING" id="94122.Shewana3_2053"/>
<dbReference type="GeneID" id="94727997"/>
<dbReference type="KEGG" id="shn:Shewana3_2053"/>
<dbReference type="eggNOG" id="COG0239">
    <property type="taxonomic scope" value="Bacteria"/>
</dbReference>
<dbReference type="HOGENOM" id="CLU_114342_3_0_6"/>
<dbReference type="OrthoDB" id="9806299at2"/>
<dbReference type="Proteomes" id="UP000002589">
    <property type="component" value="Chromosome"/>
</dbReference>
<dbReference type="GO" id="GO:0005886">
    <property type="term" value="C:plasma membrane"/>
    <property type="evidence" value="ECO:0007669"/>
    <property type="project" value="UniProtKB-SubCell"/>
</dbReference>
<dbReference type="GO" id="GO:0062054">
    <property type="term" value="F:fluoride channel activity"/>
    <property type="evidence" value="ECO:0007669"/>
    <property type="project" value="UniProtKB-UniRule"/>
</dbReference>
<dbReference type="GO" id="GO:0046872">
    <property type="term" value="F:metal ion binding"/>
    <property type="evidence" value="ECO:0007669"/>
    <property type="project" value="UniProtKB-KW"/>
</dbReference>
<dbReference type="GO" id="GO:0140114">
    <property type="term" value="P:cellular detoxification of fluoride"/>
    <property type="evidence" value="ECO:0007669"/>
    <property type="project" value="UniProtKB-UniRule"/>
</dbReference>
<dbReference type="HAMAP" id="MF_00454">
    <property type="entry name" value="FluC"/>
    <property type="match status" value="1"/>
</dbReference>
<dbReference type="InterPro" id="IPR003691">
    <property type="entry name" value="FluC"/>
</dbReference>
<dbReference type="NCBIfam" id="TIGR00494">
    <property type="entry name" value="crcB"/>
    <property type="match status" value="1"/>
</dbReference>
<dbReference type="PANTHER" id="PTHR28259">
    <property type="entry name" value="FLUORIDE EXPORT PROTEIN 1-RELATED"/>
    <property type="match status" value="1"/>
</dbReference>
<dbReference type="PANTHER" id="PTHR28259:SF1">
    <property type="entry name" value="FLUORIDE EXPORT PROTEIN 1-RELATED"/>
    <property type="match status" value="1"/>
</dbReference>
<dbReference type="Pfam" id="PF02537">
    <property type="entry name" value="CRCB"/>
    <property type="match status" value="1"/>
</dbReference>
<proteinExistence type="inferred from homology"/>
<accession>A0KWW4</accession>
<keyword id="KW-0997">Cell inner membrane</keyword>
<keyword id="KW-1003">Cell membrane</keyword>
<keyword id="KW-0407">Ion channel</keyword>
<keyword id="KW-0406">Ion transport</keyword>
<keyword id="KW-0472">Membrane</keyword>
<keyword id="KW-0479">Metal-binding</keyword>
<keyword id="KW-0915">Sodium</keyword>
<keyword id="KW-0812">Transmembrane</keyword>
<keyword id="KW-1133">Transmembrane helix</keyword>
<keyword id="KW-0813">Transport</keyword>
<organism>
    <name type="scientific">Shewanella sp. (strain ANA-3)</name>
    <dbReference type="NCBI Taxonomy" id="94122"/>
    <lineage>
        <taxon>Bacteria</taxon>
        <taxon>Pseudomonadati</taxon>
        <taxon>Pseudomonadota</taxon>
        <taxon>Gammaproteobacteria</taxon>
        <taxon>Alteromonadales</taxon>
        <taxon>Shewanellaceae</taxon>
        <taxon>Shewanella</taxon>
    </lineage>
</organism>
<comment type="function">
    <text evidence="1">Fluoride-specific ion channel. Important for reducing fluoride concentration in the cell, thus reducing its toxicity.</text>
</comment>
<comment type="catalytic activity">
    <reaction evidence="1">
        <text>fluoride(in) = fluoride(out)</text>
        <dbReference type="Rhea" id="RHEA:76159"/>
        <dbReference type="ChEBI" id="CHEBI:17051"/>
    </reaction>
    <physiologicalReaction direction="left-to-right" evidence="1">
        <dbReference type="Rhea" id="RHEA:76160"/>
    </physiologicalReaction>
</comment>
<comment type="activity regulation">
    <text evidence="1">Na(+) is not transported, but it plays an essential structural role and its presence is essential for fluoride channel function.</text>
</comment>
<comment type="subcellular location">
    <subcellularLocation>
        <location evidence="1">Cell inner membrane</location>
        <topology evidence="1">Multi-pass membrane protein</topology>
    </subcellularLocation>
</comment>
<comment type="similarity">
    <text evidence="1">Belongs to the fluoride channel Fluc/FEX (TC 1.A.43) family.</text>
</comment>
<gene>
    <name evidence="1" type="primary">fluC</name>
    <name evidence="1" type="synonym">crcB</name>
    <name type="ordered locus">Shewana3_2053</name>
</gene>
<name>FLUC_SHESA</name>
<protein>
    <recommendedName>
        <fullName evidence="1">Fluoride-specific ion channel FluC</fullName>
    </recommendedName>
</protein>